<dbReference type="EMBL" id="AB017905">
    <property type="protein sequence ID" value="BAA33471.1"/>
    <property type="molecule type" value="Genomic_DNA"/>
</dbReference>
<dbReference type="eggNOG" id="ENOG502TDHM">
    <property type="taxonomic scope" value="Eukaryota"/>
</dbReference>
<dbReference type="GO" id="GO:0005882">
    <property type="term" value="C:intermediate filament"/>
    <property type="evidence" value="ECO:0007669"/>
    <property type="project" value="UniProtKB-KW"/>
</dbReference>
<dbReference type="GO" id="GO:0005200">
    <property type="term" value="F:structural constituent of cytoskeleton"/>
    <property type="evidence" value="ECO:0007669"/>
    <property type="project" value="InterPro"/>
</dbReference>
<dbReference type="InterPro" id="IPR003461">
    <property type="entry name" value="Keratin"/>
</dbReference>
<dbReference type="PANTHER" id="PTHR31203">
    <property type="entry name" value="BETA-KERATIN-RELATED PROTEIN-RELATED"/>
    <property type="match status" value="1"/>
</dbReference>
<dbReference type="PANTHER" id="PTHR31203:SF1">
    <property type="entry name" value="BETA-KERATIN-RELATED PROTEIN-RELATED"/>
    <property type="match status" value="1"/>
</dbReference>
<dbReference type="Pfam" id="PF02422">
    <property type="entry name" value="Keratin"/>
    <property type="match status" value="1"/>
</dbReference>
<sequence>MSCCNPCLPCQPCGPTPLANSCNEPCVRQCQSSSVIIEPSSVVVILPGPILSSFPQNTVVGSSTSAAVGSILSCEGVPINSGGFDLSCITSRYCGSRCRPC</sequence>
<organism>
    <name type="scientific">Columba livia</name>
    <name type="common">Rock dove</name>
    <dbReference type="NCBI Taxonomy" id="8932"/>
    <lineage>
        <taxon>Eukaryota</taxon>
        <taxon>Metazoa</taxon>
        <taxon>Chordata</taxon>
        <taxon>Craniata</taxon>
        <taxon>Vertebrata</taxon>
        <taxon>Euteleostomi</taxon>
        <taxon>Archelosauria</taxon>
        <taxon>Archosauria</taxon>
        <taxon>Dinosauria</taxon>
        <taxon>Saurischia</taxon>
        <taxon>Theropoda</taxon>
        <taxon>Coelurosauria</taxon>
        <taxon>Aves</taxon>
        <taxon>Neognathae</taxon>
        <taxon>Neoaves</taxon>
        <taxon>Columbimorphae</taxon>
        <taxon>Columbiformes</taxon>
        <taxon>Columbidae</taxon>
        <taxon>Columba</taxon>
    </lineage>
</organism>
<reference key="1">
    <citation type="journal article" date="2003" name="DNA Seq.">
        <title>Nucleotide sequences of pigeon feather keratin genes.</title>
        <authorList>
            <person name="Takahashi R."/>
            <person name="Akahane K."/>
            <person name="Arai K."/>
        </authorList>
    </citation>
    <scope>NUCLEOTIDE SEQUENCE [GENOMIC DNA]</scope>
</reference>
<keyword id="KW-0007">Acetylation</keyword>
<keyword id="KW-0416">Keratin</keyword>
<protein>
    <recommendedName>
        <fullName>Feather keratin Cos2-2</fullName>
        <shortName>F-ker</shortName>
    </recommendedName>
</protein>
<name>KRF3_COLLI</name>
<feature type="initiator methionine" description="Removed" evidence="1">
    <location>
        <position position="1"/>
    </location>
</feature>
<feature type="chain" id="PRO_0000097004" description="Feather keratin Cos2-2">
    <location>
        <begin position="2"/>
        <end position="101"/>
    </location>
</feature>
<feature type="modified residue" description="N-acetylserine" evidence="1">
    <location>
        <position position="2"/>
    </location>
</feature>
<comment type="subunit">
    <text>The avian keratins (F-ker, S-ker, C-ker and B-ker) are a complex mixture of very similar polypeptides.</text>
</comment>
<comment type="similarity">
    <text evidence="2">Belongs to the avian keratin family.</text>
</comment>
<evidence type="ECO:0000250" key="1"/>
<evidence type="ECO:0000305" key="2"/>
<accession>O93500</accession>
<proteinExistence type="inferred from homology"/>